<gene>
    <name evidence="1" type="primary">matK</name>
</gene>
<name>MATK_BOMBU</name>
<dbReference type="EMBL" id="AY321171">
    <property type="protein sequence ID" value="AAQ84253.1"/>
    <property type="molecule type" value="Genomic_DNA"/>
</dbReference>
<dbReference type="GO" id="GO:0009507">
    <property type="term" value="C:chloroplast"/>
    <property type="evidence" value="ECO:0007669"/>
    <property type="project" value="UniProtKB-SubCell"/>
</dbReference>
<dbReference type="GO" id="GO:0003723">
    <property type="term" value="F:RNA binding"/>
    <property type="evidence" value="ECO:0007669"/>
    <property type="project" value="UniProtKB-KW"/>
</dbReference>
<dbReference type="GO" id="GO:0006397">
    <property type="term" value="P:mRNA processing"/>
    <property type="evidence" value="ECO:0007669"/>
    <property type="project" value="UniProtKB-KW"/>
</dbReference>
<dbReference type="GO" id="GO:0008380">
    <property type="term" value="P:RNA splicing"/>
    <property type="evidence" value="ECO:0007669"/>
    <property type="project" value="UniProtKB-UniRule"/>
</dbReference>
<dbReference type="GO" id="GO:0008033">
    <property type="term" value="P:tRNA processing"/>
    <property type="evidence" value="ECO:0007669"/>
    <property type="project" value="UniProtKB-KW"/>
</dbReference>
<dbReference type="HAMAP" id="MF_01390">
    <property type="entry name" value="MatK"/>
    <property type="match status" value="1"/>
</dbReference>
<dbReference type="InterPro" id="IPR024937">
    <property type="entry name" value="Domain_X"/>
</dbReference>
<dbReference type="InterPro" id="IPR002866">
    <property type="entry name" value="Maturase_MatK"/>
</dbReference>
<dbReference type="InterPro" id="IPR024942">
    <property type="entry name" value="Maturase_MatK_N"/>
</dbReference>
<dbReference type="PANTHER" id="PTHR34811">
    <property type="entry name" value="MATURASE K"/>
    <property type="match status" value="1"/>
</dbReference>
<dbReference type="PANTHER" id="PTHR34811:SF1">
    <property type="entry name" value="MATURASE K"/>
    <property type="match status" value="1"/>
</dbReference>
<dbReference type="Pfam" id="PF01348">
    <property type="entry name" value="Intron_maturas2"/>
    <property type="match status" value="1"/>
</dbReference>
<dbReference type="Pfam" id="PF01824">
    <property type="entry name" value="MatK_N"/>
    <property type="match status" value="1"/>
</dbReference>
<protein>
    <recommendedName>
        <fullName evidence="1">Maturase K</fullName>
    </recommendedName>
    <alternativeName>
        <fullName evidence="1">Intron maturase</fullName>
    </alternativeName>
</protein>
<evidence type="ECO:0000255" key="1">
    <source>
        <dbReference type="HAMAP-Rule" id="MF_01390"/>
    </source>
</evidence>
<proteinExistence type="inferred from homology"/>
<comment type="function">
    <text evidence="1">Usually encoded in the trnK tRNA gene intron. Probably assists in splicing its own and other chloroplast group II introns.</text>
</comment>
<comment type="subcellular location">
    <subcellularLocation>
        <location>Plastid</location>
        <location>Chloroplast</location>
    </subcellularLocation>
</comment>
<comment type="similarity">
    <text evidence="1">Belongs to the intron maturase 2 family. MatK subfamily.</text>
</comment>
<feature type="chain" id="PRO_0000143285" description="Maturase K">
    <location>
        <begin position="1"/>
        <end position="504"/>
    </location>
</feature>
<keyword id="KW-0150">Chloroplast</keyword>
<keyword id="KW-0507">mRNA processing</keyword>
<keyword id="KW-0934">Plastid</keyword>
<keyword id="KW-0694">RNA-binding</keyword>
<keyword id="KW-0819">tRNA processing</keyword>
<sequence length="504" mass="59700">MEEFQVYLELNRSRRHDFLYPLLFREYIYALAHDHGLNKSMIFLENQGYGNKFSSLIVKRLIIRMDQQNHLIISANDSNQNSFFGHNNNLYSQMISSGFAVIVEIPFSLRLVSYSQGEEVAKSHNLQSIHSIFPFLEDKFSHLNYVLDVLIPHPIHLEILVQALRYWVKDASSLHLLRFSLYEYCNLKSFITPKKSISILNTRLFFFLYNSHAREYESIFLFLRNQSSHLRSTSSGVFLERIYFYGKIEYLVEVFYNDFQNNLGLFKDPFIHFIRYQGKTILASKDTPLLMNKWKYYFVDLWQYYFYMWSQSGRVRINQLSKYSLDFLGYLSSVRLNPSVVRSQMLENSFIIDNAMKKLDTRIPIISLIGSLSKAKFCNTLGHPISKPTWADSSDSDIIDRFVRICRNLSHYHSGSSKKKSLYRIKYILRFSCVKTLARKHKSTVRAFLKRLGSEFLEEFFTETEDEHVFSLIFPRVFFTSRKLYRGRIWYLDIICINALVNHE</sequence>
<reference key="1">
    <citation type="submission" date="2003-06" db="EMBL/GenBank/DDBJ databases">
        <title>Phylogenetic analysis of Malvaceae sensu lato based on chloroplast and nuclear DNA sequences.</title>
        <authorList>
            <person name="Nyffeler R."/>
            <person name="Yen A."/>
            <person name="Alverson W.S."/>
            <person name="Bayer C."/>
            <person name="Blattner F."/>
            <person name="Whitlock B."/>
            <person name="Chase M.W."/>
            <person name="Baum D.A."/>
        </authorList>
    </citation>
    <scope>NUCLEOTIDE SEQUENCE [GENOMIC DNA]</scope>
</reference>
<organism>
    <name type="scientific">Bombax buonopozense</name>
    <name type="common">Red-flowered silk cotton tree</name>
    <dbReference type="NCBI Taxonomy" id="66654"/>
    <lineage>
        <taxon>Eukaryota</taxon>
        <taxon>Viridiplantae</taxon>
        <taxon>Streptophyta</taxon>
        <taxon>Embryophyta</taxon>
        <taxon>Tracheophyta</taxon>
        <taxon>Spermatophyta</taxon>
        <taxon>Magnoliopsida</taxon>
        <taxon>eudicotyledons</taxon>
        <taxon>Gunneridae</taxon>
        <taxon>Pentapetalae</taxon>
        <taxon>rosids</taxon>
        <taxon>malvids</taxon>
        <taxon>Malvales</taxon>
        <taxon>Malvaceae</taxon>
        <taxon>Bombacoideae</taxon>
        <taxon>Bombax</taxon>
    </lineage>
</organism>
<geneLocation type="chloroplast"/>
<accession>Q6EIJ3</accession>